<gene>
    <name evidence="9" type="primary">DNAlig1</name>
    <name evidence="7" type="synonym">DNA-ligI</name>
    <name evidence="9" type="ORF">CG5602</name>
</gene>
<reference key="1">
    <citation type="journal article" date="2000" name="Science">
        <title>The genome sequence of Drosophila melanogaster.</title>
        <authorList>
            <person name="Adams M.D."/>
            <person name="Celniker S.E."/>
            <person name="Holt R.A."/>
            <person name="Evans C.A."/>
            <person name="Gocayne J.D."/>
            <person name="Amanatides P.G."/>
            <person name="Scherer S.E."/>
            <person name="Li P.W."/>
            <person name="Hoskins R.A."/>
            <person name="Galle R.F."/>
            <person name="George R.A."/>
            <person name="Lewis S.E."/>
            <person name="Richards S."/>
            <person name="Ashburner M."/>
            <person name="Henderson S.N."/>
            <person name="Sutton G.G."/>
            <person name="Wortman J.R."/>
            <person name="Yandell M.D."/>
            <person name="Zhang Q."/>
            <person name="Chen L.X."/>
            <person name="Brandon R.C."/>
            <person name="Rogers Y.-H.C."/>
            <person name="Blazej R.G."/>
            <person name="Champe M."/>
            <person name="Pfeiffer B.D."/>
            <person name="Wan K.H."/>
            <person name="Doyle C."/>
            <person name="Baxter E.G."/>
            <person name="Helt G."/>
            <person name="Nelson C.R."/>
            <person name="Miklos G.L.G."/>
            <person name="Abril J.F."/>
            <person name="Agbayani A."/>
            <person name="An H.-J."/>
            <person name="Andrews-Pfannkoch C."/>
            <person name="Baldwin D."/>
            <person name="Ballew R.M."/>
            <person name="Basu A."/>
            <person name="Baxendale J."/>
            <person name="Bayraktaroglu L."/>
            <person name="Beasley E.M."/>
            <person name="Beeson K.Y."/>
            <person name="Benos P.V."/>
            <person name="Berman B.P."/>
            <person name="Bhandari D."/>
            <person name="Bolshakov S."/>
            <person name="Borkova D."/>
            <person name="Botchan M.R."/>
            <person name="Bouck J."/>
            <person name="Brokstein P."/>
            <person name="Brottier P."/>
            <person name="Burtis K.C."/>
            <person name="Busam D.A."/>
            <person name="Butler H."/>
            <person name="Cadieu E."/>
            <person name="Center A."/>
            <person name="Chandra I."/>
            <person name="Cherry J.M."/>
            <person name="Cawley S."/>
            <person name="Dahlke C."/>
            <person name="Davenport L.B."/>
            <person name="Davies P."/>
            <person name="de Pablos B."/>
            <person name="Delcher A."/>
            <person name="Deng Z."/>
            <person name="Mays A.D."/>
            <person name="Dew I."/>
            <person name="Dietz S.M."/>
            <person name="Dodson K."/>
            <person name="Doup L.E."/>
            <person name="Downes M."/>
            <person name="Dugan-Rocha S."/>
            <person name="Dunkov B.C."/>
            <person name="Dunn P."/>
            <person name="Durbin K.J."/>
            <person name="Evangelista C.C."/>
            <person name="Ferraz C."/>
            <person name="Ferriera S."/>
            <person name="Fleischmann W."/>
            <person name="Fosler C."/>
            <person name="Gabrielian A.E."/>
            <person name="Garg N.S."/>
            <person name="Gelbart W.M."/>
            <person name="Glasser K."/>
            <person name="Glodek A."/>
            <person name="Gong F."/>
            <person name="Gorrell J.H."/>
            <person name="Gu Z."/>
            <person name="Guan P."/>
            <person name="Harris M."/>
            <person name="Harris N.L."/>
            <person name="Harvey D.A."/>
            <person name="Heiman T.J."/>
            <person name="Hernandez J.R."/>
            <person name="Houck J."/>
            <person name="Hostin D."/>
            <person name="Houston K.A."/>
            <person name="Howland T.J."/>
            <person name="Wei M.-H."/>
            <person name="Ibegwam C."/>
            <person name="Jalali M."/>
            <person name="Kalush F."/>
            <person name="Karpen G.H."/>
            <person name="Ke Z."/>
            <person name="Kennison J.A."/>
            <person name="Ketchum K.A."/>
            <person name="Kimmel B.E."/>
            <person name="Kodira C.D."/>
            <person name="Kraft C.L."/>
            <person name="Kravitz S."/>
            <person name="Kulp D."/>
            <person name="Lai Z."/>
            <person name="Lasko P."/>
            <person name="Lei Y."/>
            <person name="Levitsky A.A."/>
            <person name="Li J.H."/>
            <person name="Li Z."/>
            <person name="Liang Y."/>
            <person name="Lin X."/>
            <person name="Liu X."/>
            <person name="Mattei B."/>
            <person name="McIntosh T.C."/>
            <person name="McLeod M.P."/>
            <person name="McPherson D."/>
            <person name="Merkulov G."/>
            <person name="Milshina N.V."/>
            <person name="Mobarry C."/>
            <person name="Morris J."/>
            <person name="Moshrefi A."/>
            <person name="Mount S.M."/>
            <person name="Moy M."/>
            <person name="Murphy B."/>
            <person name="Murphy L."/>
            <person name="Muzny D.M."/>
            <person name="Nelson D.L."/>
            <person name="Nelson D.R."/>
            <person name="Nelson K.A."/>
            <person name="Nixon K."/>
            <person name="Nusskern D.R."/>
            <person name="Pacleb J.M."/>
            <person name="Palazzolo M."/>
            <person name="Pittman G.S."/>
            <person name="Pan S."/>
            <person name="Pollard J."/>
            <person name="Puri V."/>
            <person name="Reese M.G."/>
            <person name="Reinert K."/>
            <person name="Remington K."/>
            <person name="Saunders R.D.C."/>
            <person name="Scheeler F."/>
            <person name="Shen H."/>
            <person name="Shue B.C."/>
            <person name="Siden-Kiamos I."/>
            <person name="Simpson M."/>
            <person name="Skupski M.P."/>
            <person name="Smith T.J."/>
            <person name="Spier E."/>
            <person name="Spradling A.C."/>
            <person name="Stapleton M."/>
            <person name="Strong R."/>
            <person name="Sun E."/>
            <person name="Svirskas R."/>
            <person name="Tector C."/>
            <person name="Turner R."/>
            <person name="Venter E."/>
            <person name="Wang A.H."/>
            <person name="Wang X."/>
            <person name="Wang Z.-Y."/>
            <person name="Wassarman D.A."/>
            <person name="Weinstock G.M."/>
            <person name="Weissenbach J."/>
            <person name="Williams S.M."/>
            <person name="Woodage T."/>
            <person name="Worley K.C."/>
            <person name="Wu D."/>
            <person name="Yang S."/>
            <person name="Yao Q.A."/>
            <person name="Ye J."/>
            <person name="Yeh R.-F."/>
            <person name="Zaveri J.S."/>
            <person name="Zhan M."/>
            <person name="Zhang G."/>
            <person name="Zhao Q."/>
            <person name="Zheng L."/>
            <person name="Zheng X.H."/>
            <person name="Zhong F.N."/>
            <person name="Zhong W."/>
            <person name="Zhou X."/>
            <person name="Zhu S.C."/>
            <person name="Zhu X."/>
            <person name="Smith H.O."/>
            <person name="Gibbs R.A."/>
            <person name="Myers E.W."/>
            <person name="Rubin G.M."/>
            <person name="Venter J.C."/>
        </authorList>
    </citation>
    <scope>NUCLEOTIDE SEQUENCE [LARGE SCALE GENOMIC DNA]</scope>
    <source>
        <strain>Berkeley</strain>
    </source>
</reference>
<reference key="2">
    <citation type="journal article" date="2002" name="Genome Biol.">
        <title>Annotation of the Drosophila melanogaster euchromatic genome: a systematic review.</title>
        <authorList>
            <person name="Misra S."/>
            <person name="Crosby M.A."/>
            <person name="Mungall C.J."/>
            <person name="Matthews B.B."/>
            <person name="Campbell K.S."/>
            <person name="Hradecky P."/>
            <person name="Huang Y."/>
            <person name="Kaminker J.S."/>
            <person name="Millburn G.H."/>
            <person name="Prochnik S.E."/>
            <person name="Smith C.D."/>
            <person name="Tupy J.L."/>
            <person name="Whitfield E.J."/>
            <person name="Bayraktaroglu L."/>
            <person name="Berman B.P."/>
            <person name="Bettencourt B.R."/>
            <person name="Celniker S.E."/>
            <person name="de Grey A.D.N.J."/>
            <person name="Drysdale R.A."/>
            <person name="Harris N.L."/>
            <person name="Richter J."/>
            <person name="Russo S."/>
            <person name="Schroeder A.J."/>
            <person name="Shu S.Q."/>
            <person name="Stapleton M."/>
            <person name="Yamada C."/>
            <person name="Ashburner M."/>
            <person name="Gelbart W.M."/>
            <person name="Rubin G.M."/>
            <person name="Lewis S.E."/>
        </authorList>
    </citation>
    <scope>GENOME REANNOTATION</scope>
    <source>
        <strain>Berkeley</strain>
    </source>
</reference>
<reference key="3">
    <citation type="journal article" date="2002" name="Genome Biol.">
        <title>A Drosophila full-length cDNA resource.</title>
        <authorList>
            <person name="Stapleton M."/>
            <person name="Carlson J.W."/>
            <person name="Brokstein P."/>
            <person name="Yu C."/>
            <person name="Champe M."/>
            <person name="George R.A."/>
            <person name="Guarin H."/>
            <person name="Kronmiller B."/>
            <person name="Pacleb J.M."/>
            <person name="Park S."/>
            <person name="Wan K.H."/>
            <person name="Rubin G.M."/>
            <person name="Celniker S.E."/>
        </authorList>
    </citation>
    <scope>NUCLEOTIDE SEQUENCE [LARGE SCALE MRNA]</scope>
    <source>
        <strain>Berkeley</strain>
        <tissue>Embryo</tissue>
    </source>
</reference>
<reference key="4">
    <citation type="submission" date="2004-10" db="EMBL/GenBank/DDBJ databases">
        <authorList>
            <person name="Stapleton M."/>
            <person name="Carlson J.W."/>
            <person name="Chavez C."/>
            <person name="Frise E."/>
            <person name="George R.A."/>
            <person name="Pacleb J.M."/>
            <person name="Park S."/>
            <person name="Wan K.H."/>
            <person name="Yu C."/>
            <person name="Rubin G.M."/>
            <person name="Celniker S.E."/>
        </authorList>
    </citation>
    <scope>NUCLEOTIDE SEQUENCE [LARGE SCALE MRNA]</scope>
    <source>
        <strain>Berkeley</strain>
        <tissue>Embryo</tissue>
    </source>
</reference>
<reference key="5">
    <citation type="journal article" date="2007" name="BMC Cell Biol.">
        <title>Distribution of DNA replication proteins in Drosophila cells.</title>
        <authorList>
            <person name="Easwaran H.P."/>
            <person name="Leonhardt H."/>
            <person name="Cardoso M.C."/>
        </authorList>
    </citation>
    <scope>SUBCELLULAR LOCATION</scope>
</reference>
<reference key="6">
    <citation type="journal article" date="2007" name="Mol. Biosyst.">
        <title>An integrated chemical, mass spectrometric and computational strategy for (quantitative) phosphoproteomics: application to Drosophila melanogaster Kc167 cells.</title>
        <authorList>
            <person name="Bodenmiller B."/>
            <person name="Mueller L.N."/>
            <person name="Pedrioli P.G.A."/>
            <person name="Pflieger D."/>
            <person name="Juenger M.A."/>
            <person name="Eng J.K."/>
            <person name="Aebersold R."/>
            <person name="Tao W.A."/>
        </authorList>
    </citation>
    <scope>PHOSPHORYLATION [LARGE SCALE ANALYSIS] AT SER-65</scope>
    <scope>IDENTIFICATION BY MASS SPECTROMETRY</scope>
</reference>
<reference key="7">
    <citation type="journal article" date="2008" name="J. Proteome Res.">
        <title>Phosphoproteome analysis of Drosophila melanogaster embryos.</title>
        <authorList>
            <person name="Zhai B."/>
            <person name="Villen J."/>
            <person name="Beausoleil S.A."/>
            <person name="Mintseris J."/>
            <person name="Gygi S.P."/>
        </authorList>
    </citation>
    <scope>PHOSPHORYLATION [LARGE SCALE ANALYSIS] AT SER-18; SER-20; SER-42; SER-44; SER-46; SER-60 AND SER-65</scope>
    <scope>IDENTIFICATION BY MASS SPECTROMETRY</scope>
    <source>
        <tissue>Embryo</tissue>
    </source>
</reference>
<sequence>MQKSITSFFKKKSDATDSPSPPKKVPKIDAKTELPDEPHIKSESASPETKPKVEPMSVDSEEKTSPVKNVKKEPKEVDDKTTDKKVTTIGLNSTAATKEDVENYDPSADSYHPLKNAYWKDKKVTPYLALARTFQVIEETKGRLKMIDTLSNFFCSVMLVSPEDLVPSVYLSINQLAPAYEGLELGVAETTLMKAICKATGRNLAHIKSQTQLTGDLGIVAEQSRVSQRMMFQPAPLNVRDVFRKLREIAKLSGQSKMDLVYNMFVACRSSEARFFIRSLIGKLRIGIAEQSLLTALAIGLVKKNHIDDCKASKVPDVYKDEIVDTTLLLKTAYCQCPNYDIIIPAILKYDIKELQERCPMHPGMPLRPMLAQPTKGVHEVFERFGGMQITCEWKYDGERAQIHRNEKGEISIFSRNSENNTAKYPDLIARSTALLKGDVKSYIIDSEIVAWDVERKQILPFQVLSTRKRKNVDIEEIKVQVCVYIFDLLYINGTALVTKNLSERRKLLLEHFQEVEGEWKFATALDTNDIDEVQQFLEESIKGNCEGLMVKTLDEEATYEIAKRSRNWLKLKKDYLSNVGDSLDLVVIGGYKGKGRRTGTYGGFLLACYDTENEEYQSICKIGTGFTDEDLQTHSEFLGKHVTSAAKSYYRYDPSLEPDHWFEPVQVWEVKCADLSLSPIHRAAIGIVDGERGISLRFPRFIRIRDDKNSENATDANQVAHMYQSQDQVKNNQKSSTQMEMEDEFY</sequence>
<protein>
    <recommendedName>
        <fullName>DNA ligase 1</fullName>
        <ecNumber evidence="2">6.5.1.1</ecNumber>
    </recommendedName>
    <alternativeName>
        <fullName>DNA ligase I</fullName>
        <shortName>DmDNA Lig I</shortName>
    </alternativeName>
</protein>
<proteinExistence type="evidence at protein level"/>
<feature type="chain" id="PRO_0000372657" description="DNA ligase 1">
    <location>
        <begin position="1"/>
        <end position="747"/>
    </location>
</feature>
<feature type="region of interest" description="Disordered" evidence="3">
    <location>
        <begin position="1"/>
        <end position="84"/>
    </location>
</feature>
<feature type="region of interest" description="Disordered" evidence="3">
    <location>
        <begin position="725"/>
        <end position="747"/>
    </location>
</feature>
<feature type="compositionally biased region" description="Basic and acidic residues" evidence="3">
    <location>
        <begin position="26"/>
        <end position="42"/>
    </location>
</feature>
<feature type="compositionally biased region" description="Basic and acidic residues" evidence="3">
    <location>
        <begin position="60"/>
        <end position="84"/>
    </location>
</feature>
<feature type="compositionally biased region" description="Polar residues" evidence="3">
    <location>
        <begin position="725"/>
        <end position="740"/>
    </location>
</feature>
<feature type="active site" description="N6-AMP-lysine intermediate" evidence="2">
    <location>
        <position position="395"/>
    </location>
</feature>
<feature type="modified residue" description="Phosphoserine" evidence="6">
    <location>
        <position position="18"/>
    </location>
</feature>
<feature type="modified residue" description="Phosphoserine" evidence="6">
    <location>
        <position position="20"/>
    </location>
</feature>
<feature type="modified residue" description="Phosphoserine" evidence="6">
    <location>
        <position position="42"/>
    </location>
</feature>
<feature type="modified residue" description="Phosphoserine" evidence="6">
    <location>
        <position position="44"/>
    </location>
</feature>
<feature type="modified residue" description="Phosphoserine" evidence="6">
    <location>
        <position position="46"/>
    </location>
</feature>
<feature type="modified residue" description="Phosphoserine" evidence="6">
    <location>
        <position position="60"/>
    </location>
</feature>
<feature type="modified residue" description="Phosphoserine" evidence="4 6">
    <location>
        <position position="65"/>
    </location>
</feature>
<feature type="sequence conflict" description="In Ref. 3; AAK93363." evidence="8" ref="3">
    <location>
        <begin position="361"/>
        <end position="387"/>
    </location>
</feature>
<evidence type="ECO:0000250" key="1"/>
<evidence type="ECO:0000255" key="2">
    <source>
        <dbReference type="PROSITE-ProRule" id="PRU10135"/>
    </source>
</evidence>
<evidence type="ECO:0000256" key="3">
    <source>
        <dbReference type="SAM" id="MobiDB-lite"/>
    </source>
</evidence>
<evidence type="ECO:0000269" key="4">
    <source>
    </source>
</evidence>
<evidence type="ECO:0000269" key="5">
    <source>
    </source>
</evidence>
<evidence type="ECO:0000269" key="6">
    <source>
    </source>
</evidence>
<evidence type="ECO:0000303" key="7">
    <source>
    </source>
</evidence>
<evidence type="ECO:0000305" key="8"/>
<evidence type="ECO:0000312" key="9">
    <source>
        <dbReference type="FlyBase" id="FBgn0262619"/>
    </source>
</evidence>
<dbReference type="EC" id="6.5.1.1" evidence="2"/>
<dbReference type="EMBL" id="AE013599">
    <property type="protein sequence ID" value="AAF47090.3"/>
    <property type="molecule type" value="Genomic_DNA"/>
</dbReference>
<dbReference type="EMBL" id="AY051939">
    <property type="protein sequence ID" value="AAK93363.1"/>
    <property type="molecule type" value="mRNA"/>
</dbReference>
<dbReference type="EMBL" id="BT016103">
    <property type="protein sequence ID" value="AAV36988.1"/>
    <property type="molecule type" value="mRNA"/>
</dbReference>
<dbReference type="RefSeq" id="NP_611843.2">
    <property type="nucleotide sequence ID" value="NM_137999.3"/>
</dbReference>
<dbReference type="SMR" id="Q9W1H4"/>
<dbReference type="BioGRID" id="63384">
    <property type="interactions" value="2"/>
</dbReference>
<dbReference type="FunCoup" id="Q9W1H4">
    <property type="interactions" value="1557"/>
</dbReference>
<dbReference type="IntAct" id="Q9W1H4">
    <property type="interactions" value="1"/>
</dbReference>
<dbReference type="STRING" id="7227.FBpp0072041"/>
<dbReference type="iPTMnet" id="Q9W1H4"/>
<dbReference type="PaxDb" id="7227-FBpp0072041"/>
<dbReference type="DNASU" id="37791"/>
<dbReference type="EnsemblMetazoa" id="FBtr0072132">
    <property type="protein sequence ID" value="FBpp0072041"/>
    <property type="gene ID" value="FBgn0262619"/>
</dbReference>
<dbReference type="GeneID" id="37791"/>
<dbReference type="KEGG" id="dme:Dmel_CG5602"/>
<dbReference type="UCSC" id="CG5602-RA">
    <property type="organism name" value="d. melanogaster"/>
</dbReference>
<dbReference type="AGR" id="FB:FBgn0262619"/>
<dbReference type="CTD" id="37791"/>
<dbReference type="FlyBase" id="FBgn0262619">
    <property type="gene designation" value="DNAlig1"/>
</dbReference>
<dbReference type="VEuPathDB" id="VectorBase:FBgn0262619"/>
<dbReference type="eggNOG" id="KOG0967">
    <property type="taxonomic scope" value="Eukaryota"/>
</dbReference>
<dbReference type="GeneTree" id="ENSGT00940000157783"/>
<dbReference type="HOGENOM" id="CLU_005138_4_2_1"/>
<dbReference type="InParanoid" id="Q9W1H4"/>
<dbReference type="OMA" id="WIKYKRD"/>
<dbReference type="OrthoDB" id="206088at2759"/>
<dbReference type="PhylomeDB" id="Q9W1H4"/>
<dbReference type="Reactome" id="R-DME-5358565">
    <property type="pathway name" value="Mismatch repair (MMR) directed by MSH2:MSH6 (MutSalpha)"/>
</dbReference>
<dbReference type="Reactome" id="R-DME-5358606">
    <property type="pathway name" value="Mismatch repair (MMR) directed by MSH2:MSH3 (MutSbeta)"/>
</dbReference>
<dbReference type="Reactome" id="R-DME-5651801">
    <property type="pathway name" value="PCNA-Dependent Long Patch Base Excision Repair"/>
</dbReference>
<dbReference type="Reactome" id="R-DME-6782210">
    <property type="pathway name" value="Gap-filling DNA repair synthesis and ligation in TC-NER"/>
</dbReference>
<dbReference type="Reactome" id="R-DME-69183">
    <property type="pathway name" value="Processive synthesis on the lagging strand"/>
</dbReference>
<dbReference type="BioGRID-ORCS" id="37791">
    <property type="hits" value="0 hits in 3 CRISPR screens"/>
</dbReference>
<dbReference type="GenomeRNAi" id="37791"/>
<dbReference type="PRO" id="PR:Q9W1H4"/>
<dbReference type="Proteomes" id="UP000000803">
    <property type="component" value="Chromosome 2R"/>
</dbReference>
<dbReference type="Bgee" id="FBgn0262619">
    <property type="expression patterns" value="Expressed in secondary oocyte and 23 other cell types or tissues"/>
</dbReference>
<dbReference type="GO" id="GO:0005737">
    <property type="term" value="C:cytoplasm"/>
    <property type="evidence" value="ECO:0000314"/>
    <property type="project" value="FlyBase"/>
</dbReference>
<dbReference type="GO" id="GO:0005634">
    <property type="term" value="C:nucleus"/>
    <property type="evidence" value="ECO:0000318"/>
    <property type="project" value="GO_Central"/>
</dbReference>
<dbReference type="GO" id="GO:0005524">
    <property type="term" value="F:ATP binding"/>
    <property type="evidence" value="ECO:0007669"/>
    <property type="project" value="UniProtKB-KW"/>
</dbReference>
<dbReference type="GO" id="GO:0003677">
    <property type="term" value="F:DNA binding"/>
    <property type="evidence" value="ECO:0007669"/>
    <property type="project" value="InterPro"/>
</dbReference>
<dbReference type="GO" id="GO:0003910">
    <property type="term" value="F:DNA ligase (ATP) activity"/>
    <property type="evidence" value="ECO:0000314"/>
    <property type="project" value="FlyBase"/>
</dbReference>
<dbReference type="GO" id="GO:0051301">
    <property type="term" value="P:cell division"/>
    <property type="evidence" value="ECO:0007669"/>
    <property type="project" value="UniProtKB-KW"/>
</dbReference>
<dbReference type="GO" id="GO:0071897">
    <property type="term" value="P:DNA biosynthetic process"/>
    <property type="evidence" value="ECO:0007669"/>
    <property type="project" value="InterPro"/>
</dbReference>
<dbReference type="GO" id="GO:0006310">
    <property type="term" value="P:DNA recombination"/>
    <property type="evidence" value="ECO:0007669"/>
    <property type="project" value="UniProtKB-KW"/>
</dbReference>
<dbReference type="GO" id="GO:0006281">
    <property type="term" value="P:DNA repair"/>
    <property type="evidence" value="ECO:0007669"/>
    <property type="project" value="UniProtKB-KW"/>
</dbReference>
<dbReference type="GO" id="GO:0006273">
    <property type="term" value="P:lagging strand elongation"/>
    <property type="evidence" value="ECO:0000318"/>
    <property type="project" value="GO_Central"/>
</dbReference>
<dbReference type="GO" id="GO:1903461">
    <property type="term" value="P:Okazaki fragment processing involved in mitotic DNA replication"/>
    <property type="evidence" value="ECO:0000318"/>
    <property type="project" value="GO_Central"/>
</dbReference>
<dbReference type="CDD" id="cd07900">
    <property type="entry name" value="Adenylation_DNA_ligase_I_Euk"/>
    <property type="match status" value="1"/>
</dbReference>
<dbReference type="CDD" id="cd07969">
    <property type="entry name" value="OBF_DNA_ligase_I"/>
    <property type="match status" value="1"/>
</dbReference>
<dbReference type="FunFam" id="1.10.3260.10:FF:000001">
    <property type="entry name" value="DNA ligase"/>
    <property type="match status" value="1"/>
</dbReference>
<dbReference type="FunFam" id="2.40.50.140:FF:000062">
    <property type="entry name" value="DNA ligase"/>
    <property type="match status" value="1"/>
</dbReference>
<dbReference type="FunFam" id="3.30.470.30:FF:000016">
    <property type="entry name" value="DNA ligase"/>
    <property type="match status" value="1"/>
</dbReference>
<dbReference type="Gene3D" id="3.30.1490.70">
    <property type="match status" value="1"/>
</dbReference>
<dbReference type="Gene3D" id="1.10.3260.10">
    <property type="entry name" value="DNA ligase, ATP-dependent, N-terminal domain"/>
    <property type="match status" value="1"/>
</dbReference>
<dbReference type="Gene3D" id="3.30.470.30">
    <property type="entry name" value="DNA ligase/mRNA capping enzyme"/>
    <property type="match status" value="1"/>
</dbReference>
<dbReference type="Gene3D" id="2.40.50.140">
    <property type="entry name" value="Nucleic acid-binding proteins"/>
    <property type="match status" value="1"/>
</dbReference>
<dbReference type="InterPro" id="IPR050191">
    <property type="entry name" value="ATP-dep_DNA_ligase"/>
</dbReference>
<dbReference type="InterPro" id="IPR000977">
    <property type="entry name" value="DNA_ligase_ATP-dep"/>
</dbReference>
<dbReference type="InterPro" id="IPR012309">
    <property type="entry name" value="DNA_ligase_ATP-dep_C"/>
</dbReference>
<dbReference type="InterPro" id="IPR012310">
    <property type="entry name" value="DNA_ligase_ATP-dep_cent"/>
</dbReference>
<dbReference type="InterPro" id="IPR016059">
    <property type="entry name" value="DNA_ligase_ATP-dep_CS"/>
</dbReference>
<dbReference type="InterPro" id="IPR012308">
    <property type="entry name" value="DNA_ligase_ATP-dep_N"/>
</dbReference>
<dbReference type="InterPro" id="IPR036599">
    <property type="entry name" value="DNA_ligase_N_sf"/>
</dbReference>
<dbReference type="InterPro" id="IPR012340">
    <property type="entry name" value="NA-bd_OB-fold"/>
</dbReference>
<dbReference type="NCBIfam" id="TIGR00574">
    <property type="entry name" value="dnl1"/>
    <property type="match status" value="1"/>
</dbReference>
<dbReference type="PANTHER" id="PTHR45674:SF4">
    <property type="entry name" value="DNA LIGASE 1"/>
    <property type="match status" value="1"/>
</dbReference>
<dbReference type="PANTHER" id="PTHR45674">
    <property type="entry name" value="DNA LIGASE 1/3 FAMILY MEMBER"/>
    <property type="match status" value="1"/>
</dbReference>
<dbReference type="Pfam" id="PF04679">
    <property type="entry name" value="DNA_ligase_A_C"/>
    <property type="match status" value="1"/>
</dbReference>
<dbReference type="Pfam" id="PF01068">
    <property type="entry name" value="DNA_ligase_A_M"/>
    <property type="match status" value="1"/>
</dbReference>
<dbReference type="Pfam" id="PF04675">
    <property type="entry name" value="DNA_ligase_A_N"/>
    <property type="match status" value="1"/>
</dbReference>
<dbReference type="SUPFAM" id="SSF117018">
    <property type="entry name" value="ATP-dependent DNA ligase DNA-binding domain"/>
    <property type="match status" value="1"/>
</dbReference>
<dbReference type="SUPFAM" id="SSF56091">
    <property type="entry name" value="DNA ligase/mRNA capping enzyme, catalytic domain"/>
    <property type="match status" value="1"/>
</dbReference>
<dbReference type="SUPFAM" id="SSF50249">
    <property type="entry name" value="Nucleic acid-binding proteins"/>
    <property type="match status" value="1"/>
</dbReference>
<dbReference type="PROSITE" id="PS00697">
    <property type="entry name" value="DNA_LIGASE_A1"/>
    <property type="match status" value="1"/>
</dbReference>
<dbReference type="PROSITE" id="PS00333">
    <property type="entry name" value="DNA_LIGASE_A2"/>
    <property type="match status" value="1"/>
</dbReference>
<dbReference type="PROSITE" id="PS50160">
    <property type="entry name" value="DNA_LIGASE_A3"/>
    <property type="match status" value="1"/>
</dbReference>
<comment type="function">
    <text evidence="1">DNA ligase that seals nicks in double-stranded DNA during DNA replication, DNA recombination and DNA repair.</text>
</comment>
<comment type="catalytic activity">
    <reaction evidence="2">
        <text>ATP + (deoxyribonucleotide)n-3'-hydroxyl + 5'-phospho-(deoxyribonucleotide)m = (deoxyribonucleotide)n+m + AMP + diphosphate.</text>
        <dbReference type="EC" id="6.5.1.1"/>
    </reaction>
</comment>
<comment type="subcellular location">
    <subcellularLocation>
        <location evidence="5">Nucleus</location>
    </subcellularLocation>
    <text>Does not accumulate at the replication foci (RF).</text>
</comment>
<comment type="similarity">
    <text evidence="8">Belongs to the ATP-dependent DNA ligase family.</text>
</comment>
<name>DNLI1_DROME</name>
<accession>Q9W1H4</accession>
<accession>Q960P4</accession>
<organism>
    <name type="scientific">Drosophila melanogaster</name>
    <name type="common">Fruit fly</name>
    <dbReference type="NCBI Taxonomy" id="7227"/>
    <lineage>
        <taxon>Eukaryota</taxon>
        <taxon>Metazoa</taxon>
        <taxon>Ecdysozoa</taxon>
        <taxon>Arthropoda</taxon>
        <taxon>Hexapoda</taxon>
        <taxon>Insecta</taxon>
        <taxon>Pterygota</taxon>
        <taxon>Neoptera</taxon>
        <taxon>Endopterygota</taxon>
        <taxon>Diptera</taxon>
        <taxon>Brachycera</taxon>
        <taxon>Muscomorpha</taxon>
        <taxon>Ephydroidea</taxon>
        <taxon>Drosophilidae</taxon>
        <taxon>Drosophila</taxon>
        <taxon>Sophophora</taxon>
    </lineage>
</organism>
<keyword id="KW-0067">ATP-binding</keyword>
<keyword id="KW-0131">Cell cycle</keyword>
<keyword id="KW-0132">Cell division</keyword>
<keyword id="KW-0227">DNA damage</keyword>
<keyword id="KW-0233">DNA recombination</keyword>
<keyword id="KW-0234">DNA repair</keyword>
<keyword id="KW-0235">DNA replication</keyword>
<keyword id="KW-0436">Ligase</keyword>
<keyword id="KW-0547">Nucleotide-binding</keyword>
<keyword id="KW-0539">Nucleus</keyword>
<keyword id="KW-0597">Phosphoprotein</keyword>
<keyword id="KW-1185">Reference proteome</keyword>